<name>VCIP1_HUMAN</name>
<feature type="chain" id="PRO_0000065769" description="Deubiquitinating protein VCPIP1">
    <location>
        <begin position="1"/>
        <end position="1222"/>
    </location>
</feature>
<feature type="domain" description="OTU" evidence="3">
    <location>
        <begin position="208"/>
        <end position="361"/>
    </location>
</feature>
<feature type="region of interest" description="Disordered" evidence="4">
    <location>
        <begin position="1"/>
        <end position="36"/>
    </location>
</feature>
<feature type="region of interest" description="Disordered" evidence="4">
    <location>
        <begin position="725"/>
        <end position="776"/>
    </location>
</feature>
<feature type="region of interest" description="Disordered" evidence="4">
    <location>
        <begin position="989"/>
        <end position="1009"/>
    </location>
</feature>
<feature type="region of interest" description="Disordered" evidence="4">
    <location>
        <begin position="1024"/>
        <end position="1074"/>
    </location>
</feature>
<feature type="region of interest" description="Disordered" evidence="4">
    <location>
        <begin position="1113"/>
        <end position="1175"/>
    </location>
</feature>
<feature type="region of interest" description="Disordered" evidence="4">
    <location>
        <begin position="1188"/>
        <end position="1222"/>
    </location>
</feature>
<feature type="compositionally biased region" description="Pro residues" evidence="4">
    <location>
        <begin position="1"/>
        <end position="21"/>
    </location>
</feature>
<feature type="compositionally biased region" description="Low complexity" evidence="4">
    <location>
        <begin position="25"/>
        <end position="36"/>
    </location>
</feature>
<feature type="compositionally biased region" description="Low complexity" evidence="4">
    <location>
        <begin position="755"/>
        <end position="771"/>
    </location>
</feature>
<feature type="compositionally biased region" description="Basic and acidic residues" evidence="4">
    <location>
        <begin position="1041"/>
        <end position="1050"/>
    </location>
</feature>
<feature type="compositionally biased region" description="Polar residues" evidence="4">
    <location>
        <begin position="1057"/>
        <end position="1074"/>
    </location>
</feature>
<feature type="compositionally biased region" description="Polar residues" evidence="4">
    <location>
        <begin position="1143"/>
        <end position="1157"/>
    </location>
</feature>
<feature type="compositionally biased region" description="Low complexity" evidence="4">
    <location>
        <begin position="1163"/>
        <end position="1175"/>
    </location>
</feature>
<feature type="compositionally biased region" description="Acidic residues" evidence="4">
    <location>
        <begin position="1200"/>
        <end position="1209"/>
    </location>
</feature>
<feature type="compositionally biased region" description="Polar residues" evidence="4">
    <location>
        <begin position="1210"/>
        <end position="1222"/>
    </location>
</feature>
<feature type="active site" evidence="2">
    <location>
        <position position="216"/>
    </location>
</feature>
<feature type="active site" description="Nucleophile" evidence="12">
    <location>
        <position position="219"/>
    </location>
</feature>
<feature type="active site" evidence="2">
    <location>
        <position position="354"/>
    </location>
</feature>
<feature type="modified residue" description="N6-acetyllysine" evidence="15">
    <location>
        <position position="408"/>
    </location>
</feature>
<feature type="modified residue" description="Phosphoserine" evidence="14 19">
    <location>
        <position position="747"/>
    </location>
</feature>
<feature type="modified residue" description="Phosphoserine" evidence="19">
    <location>
        <position position="757"/>
    </location>
</feature>
<feature type="modified residue" description="Phosphothreonine" evidence="14">
    <location>
        <position position="763"/>
    </location>
</feature>
<feature type="modified residue" description="Phosphoserine" evidence="19">
    <location>
        <position position="768"/>
    </location>
</feature>
<feature type="modified residue" description="Phosphoserine" evidence="14 19">
    <location>
        <position position="994"/>
    </location>
</feature>
<feature type="modified residue" description="Phosphoserine" evidence="19">
    <location>
        <position position="998"/>
    </location>
</feature>
<feature type="modified residue" description="Phosphoserine" evidence="19">
    <location>
        <position position="1077"/>
    </location>
</feature>
<feature type="modified residue" description="Phosphoserine" evidence="14 16 17 18 19">
    <location>
        <position position="1198"/>
    </location>
</feature>
<feature type="modified residue" description="Phosphoserine; by ATM" evidence="7">
    <location>
        <position position="1207"/>
    </location>
</feature>
<feature type="mutagenesis site" description="Loss of deubiquitinating activity and ability to deubiquitinate SPRTN." evidence="7">
    <original>C</original>
    <variation>A</variation>
    <location>
        <position position="219"/>
    </location>
</feature>
<feature type="mutagenesis site" description="Abolished phosphorylation in response to covalent DNA-protein cross-links (DPCs)." evidence="7">
    <original>S</original>
    <variation>A</variation>
    <location>
        <position position="1207"/>
    </location>
</feature>
<feature type="sequence conflict" description="In Ref. 2; CAD89944." evidence="11" ref="2">
    <original>L</original>
    <variation>P</variation>
    <location>
        <position position="169"/>
    </location>
</feature>
<feature type="sequence conflict" description="In Ref. 2; CAD89944." evidence="11" ref="2">
    <original>Q</original>
    <variation>R</variation>
    <location>
        <position position="437"/>
    </location>
</feature>
<feature type="sequence conflict" description="In Ref. 3; AAH49379." evidence="11" ref="3">
    <original>P</original>
    <variation>F</variation>
    <location>
        <position position="811"/>
    </location>
</feature>
<feature type="sequence conflict" description="In Ref. 3." evidence="11" ref="3">
    <location>
        <position position="927"/>
    </location>
</feature>
<feature type="sequence conflict" description="In Ref. 3; AAH49379." evidence="11" ref="3">
    <original>A</original>
    <variation>S</variation>
    <location>
        <position position="988"/>
    </location>
</feature>
<feature type="turn" evidence="20">
    <location>
        <begin position="114"/>
        <end position="116"/>
    </location>
</feature>
<feature type="helix" evidence="20">
    <location>
        <begin position="124"/>
        <end position="128"/>
    </location>
</feature>
<feature type="helix" evidence="20">
    <location>
        <begin position="131"/>
        <end position="134"/>
    </location>
</feature>
<feature type="strand" evidence="20">
    <location>
        <begin position="137"/>
        <end position="139"/>
    </location>
</feature>
<feature type="strand" evidence="20">
    <location>
        <begin position="141"/>
        <end position="143"/>
    </location>
</feature>
<feature type="strand" evidence="20">
    <location>
        <begin position="146"/>
        <end position="148"/>
    </location>
</feature>
<feature type="turn" evidence="20">
    <location>
        <begin position="149"/>
        <end position="153"/>
    </location>
</feature>
<feature type="turn" evidence="20">
    <location>
        <begin position="155"/>
        <end position="158"/>
    </location>
</feature>
<feature type="helix" evidence="20">
    <location>
        <begin position="160"/>
        <end position="165"/>
    </location>
</feature>
<feature type="helix" evidence="20">
    <location>
        <begin position="172"/>
        <end position="174"/>
    </location>
</feature>
<feature type="strand" evidence="20">
    <location>
        <begin position="175"/>
        <end position="177"/>
    </location>
</feature>
<feature type="turn" evidence="20">
    <location>
        <begin position="178"/>
        <end position="180"/>
    </location>
</feature>
<feature type="helix" evidence="20">
    <location>
        <begin position="187"/>
        <end position="190"/>
    </location>
</feature>
<feature type="helix" evidence="20">
    <location>
        <begin position="192"/>
        <end position="201"/>
    </location>
</feature>
<feature type="strand" evidence="20">
    <location>
        <begin position="209"/>
        <end position="211"/>
    </location>
</feature>
<feature type="helix" evidence="20">
    <location>
        <begin position="219"/>
        <end position="228"/>
    </location>
</feature>
<feature type="helix" evidence="20">
    <location>
        <begin position="235"/>
        <end position="248"/>
    </location>
</feature>
<feature type="helix" evidence="20">
    <location>
        <begin position="250"/>
        <end position="257"/>
    </location>
</feature>
<feature type="turn" evidence="20">
    <location>
        <begin position="258"/>
        <end position="260"/>
    </location>
</feature>
<feature type="helix" evidence="20">
    <location>
        <begin position="263"/>
        <end position="272"/>
    </location>
</feature>
<feature type="helix" evidence="20">
    <location>
        <begin position="290"/>
        <end position="298"/>
    </location>
</feature>
<feature type="strand" evidence="20">
    <location>
        <begin position="303"/>
        <end position="306"/>
    </location>
</feature>
<feature type="helix" evidence="20">
    <location>
        <begin position="309"/>
        <end position="313"/>
    </location>
</feature>
<feature type="helix" evidence="20">
    <location>
        <begin position="329"/>
        <end position="332"/>
    </location>
</feature>
<feature type="strand" evidence="20">
    <location>
        <begin position="337"/>
        <end position="339"/>
    </location>
</feature>
<feature type="strand" evidence="20">
    <location>
        <begin position="343"/>
        <end position="347"/>
    </location>
</feature>
<feature type="strand" evidence="20">
    <location>
        <begin position="355"/>
        <end position="361"/>
    </location>
</feature>
<feature type="turn" evidence="20">
    <location>
        <begin position="371"/>
        <end position="373"/>
    </location>
</feature>
<feature type="strand" evidence="20">
    <location>
        <begin position="377"/>
        <end position="380"/>
    </location>
</feature>
<feature type="helix" evidence="20">
    <location>
        <begin position="384"/>
        <end position="388"/>
    </location>
</feature>
<feature type="helix" evidence="20">
    <location>
        <begin position="407"/>
        <end position="425"/>
    </location>
</feature>
<feature type="helix" evidence="20">
    <location>
        <begin position="429"/>
        <end position="438"/>
    </location>
</feature>
<feature type="helix" evidence="20">
    <location>
        <begin position="441"/>
        <end position="443"/>
    </location>
</feature>
<feature type="helix" evidence="20">
    <location>
        <begin position="450"/>
        <end position="462"/>
    </location>
</feature>
<feature type="strand" evidence="20">
    <location>
        <begin position="466"/>
        <end position="472"/>
    </location>
</feature>
<feature type="strand" evidence="20">
    <location>
        <begin position="475"/>
        <end position="477"/>
    </location>
</feature>
<feature type="helix" evidence="20">
    <location>
        <begin position="482"/>
        <end position="484"/>
    </location>
</feature>
<feature type="helix" evidence="20">
    <location>
        <begin position="490"/>
        <end position="499"/>
    </location>
</feature>
<feature type="turn" evidence="20">
    <location>
        <begin position="511"/>
        <end position="513"/>
    </location>
</feature>
<feature type="strand" evidence="20">
    <location>
        <begin position="516"/>
        <end position="520"/>
    </location>
</feature>
<feature type="turn" evidence="20">
    <location>
        <begin position="521"/>
        <end position="524"/>
    </location>
</feature>
<feature type="strand" evidence="20">
    <location>
        <begin position="525"/>
        <end position="528"/>
    </location>
</feature>
<feature type="turn" evidence="20">
    <location>
        <begin position="530"/>
        <end position="532"/>
    </location>
</feature>
<feature type="strand" evidence="20">
    <location>
        <begin position="539"/>
        <end position="541"/>
    </location>
</feature>
<feature type="strand" evidence="20">
    <location>
        <begin position="546"/>
        <end position="549"/>
    </location>
</feature>
<feature type="strand" evidence="20">
    <location>
        <begin position="562"/>
        <end position="566"/>
    </location>
</feature>
<feature type="strand" evidence="20">
    <location>
        <begin position="576"/>
        <end position="580"/>
    </location>
</feature>
<feature type="strand" evidence="20">
    <location>
        <begin position="583"/>
        <end position="587"/>
    </location>
</feature>
<feature type="strand" evidence="20">
    <location>
        <begin position="590"/>
        <end position="598"/>
    </location>
</feature>
<feature type="strand" evidence="20">
    <location>
        <begin position="601"/>
        <end position="609"/>
    </location>
</feature>
<feature type="helix" evidence="20">
    <location>
        <begin position="616"/>
        <end position="618"/>
    </location>
</feature>
<feature type="helix" evidence="20">
    <location>
        <begin position="622"/>
        <end position="633"/>
    </location>
</feature>
<feature type="helix" evidence="20">
    <location>
        <begin position="640"/>
        <end position="655"/>
    </location>
</feature>
<feature type="turn" evidence="20">
    <location>
        <begin position="669"/>
        <end position="671"/>
    </location>
</feature>
<reference key="1">
    <citation type="journal article" date="2001" name="DNA Res.">
        <title>Prediction of the coding sequences of unidentified human genes. XX. The complete sequences of 100 new cDNA clones from brain which code for large proteins in vitro.</title>
        <authorList>
            <person name="Nagase T."/>
            <person name="Nakayama M."/>
            <person name="Nakajima D."/>
            <person name="Kikuno R."/>
            <person name="Ohara O."/>
        </authorList>
    </citation>
    <scope>NUCLEOTIDE SEQUENCE [LARGE SCALE MRNA]</scope>
    <source>
        <tissue>Brain</tissue>
    </source>
</reference>
<reference key="2">
    <citation type="journal article" date="2007" name="BMC Genomics">
        <title>The full-ORF clone resource of the German cDNA consortium.</title>
        <authorList>
            <person name="Bechtel S."/>
            <person name="Rosenfelder H."/>
            <person name="Duda A."/>
            <person name="Schmidt C.P."/>
            <person name="Ernst U."/>
            <person name="Wellenreuther R."/>
            <person name="Mehrle A."/>
            <person name="Schuster C."/>
            <person name="Bahr A."/>
            <person name="Bloecker H."/>
            <person name="Heubner D."/>
            <person name="Hoerlein A."/>
            <person name="Michel G."/>
            <person name="Wedler H."/>
            <person name="Koehrer K."/>
            <person name="Ottenwaelder B."/>
            <person name="Poustka A."/>
            <person name="Wiemann S."/>
            <person name="Schupp I."/>
        </authorList>
    </citation>
    <scope>NUCLEOTIDE SEQUENCE [LARGE SCALE MRNA]</scope>
    <source>
        <tissue>Melanoma</tissue>
    </source>
</reference>
<reference key="3">
    <citation type="journal article" date="2004" name="Genome Res.">
        <title>The status, quality, and expansion of the NIH full-length cDNA project: the Mammalian Gene Collection (MGC).</title>
        <authorList>
            <consortium name="The MGC Project Team"/>
        </authorList>
    </citation>
    <scope>NUCLEOTIDE SEQUENCE [LARGE SCALE MRNA]</scope>
    <source>
        <tissue>Testis</tissue>
        <tissue>Uterus</tissue>
    </source>
</reference>
<reference key="4">
    <citation type="journal article" date="2004" name="Nat. Genet.">
        <title>Complete sequencing and characterization of 21,243 full-length human cDNAs.</title>
        <authorList>
            <person name="Ota T."/>
            <person name="Suzuki Y."/>
            <person name="Nishikawa T."/>
            <person name="Otsuki T."/>
            <person name="Sugiyama T."/>
            <person name="Irie R."/>
            <person name="Wakamatsu A."/>
            <person name="Hayashi K."/>
            <person name="Sato H."/>
            <person name="Nagai K."/>
            <person name="Kimura K."/>
            <person name="Makita H."/>
            <person name="Sekine M."/>
            <person name="Obayashi M."/>
            <person name="Nishi T."/>
            <person name="Shibahara T."/>
            <person name="Tanaka T."/>
            <person name="Ishii S."/>
            <person name="Yamamoto J."/>
            <person name="Saito K."/>
            <person name="Kawai Y."/>
            <person name="Isono Y."/>
            <person name="Nakamura Y."/>
            <person name="Nagahari K."/>
            <person name="Murakami K."/>
            <person name="Yasuda T."/>
            <person name="Iwayanagi T."/>
            <person name="Wagatsuma M."/>
            <person name="Shiratori A."/>
            <person name="Sudo H."/>
            <person name="Hosoiri T."/>
            <person name="Kaku Y."/>
            <person name="Kodaira H."/>
            <person name="Kondo H."/>
            <person name="Sugawara M."/>
            <person name="Takahashi M."/>
            <person name="Kanda K."/>
            <person name="Yokoi T."/>
            <person name="Furuya T."/>
            <person name="Kikkawa E."/>
            <person name="Omura Y."/>
            <person name="Abe K."/>
            <person name="Kamihara K."/>
            <person name="Katsuta N."/>
            <person name="Sato K."/>
            <person name="Tanikawa M."/>
            <person name="Yamazaki M."/>
            <person name="Ninomiya K."/>
            <person name="Ishibashi T."/>
            <person name="Yamashita H."/>
            <person name="Murakawa K."/>
            <person name="Fujimori K."/>
            <person name="Tanai H."/>
            <person name="Kimata M."/>
            <person name="Watanabe M."/>
            <person name="Hiraoka S."/>
            <person name="Chiba Y."/>
            <person name="Ishida S."/>
            <person name="Ono Y."/>
            <person name="Takiguchi S."/>
            <person name="Watanabe S."/>
            <person name="Yosida M."/>
            <person name="Hotuta T."/>
            <person name="Kusano J."/>
            <person name="Kanehori K."/>
            <person name="Takahashi-Fujii A."/>
            <person name="Hara H."/>
            <person name="Tanase T.-O."/>
            <person name="Nomura Y."/>
            <person name="Togiya S."/>
            <person name="Komai F."/>
            <person name="Hara R."/>
            <person name="Takeuchi K."/>
            <person name="Arita M."/>
            <person name="Imose N."/>
            <person name="Musashino K."/>
            <person name="Yuuki H."/>
            <person name="Oshima A."/>
            <person name="Sasaki N."/>
            <person name="Aotsuka S."/>
            <person name="Yoshikawa Y."/>
            <person name="Matsunawa H."/>
            <person name="Ichihara T."/>
            <person name="Shiohata N."/>
            <person name="Sano S."/>
            <person name="Moriya S."/>
            <person name="Momiyama H."/>
            <person name="Satoh N."/>
            <person name="Takami S."/>
            <person name="Terashima Y."/>
            <person name="Suzuki O."/>
            <person name="Nakagawa S."/>
            <person name="Senoh A."/>
            <person name="Mizoguchi H."/>
            <person name="Goto Y."/>
            <person name="Shimizu F."/>
            <person name="Wakebe H."/>
            <person name="Hishigaki H."/>
            <person name="Watanabe T."/>
            <person name="Sugiyama A."/>
            <person name="Takemoto M."/>
            <person name="Kawakami B."/>
            <person name="Yamazaki M."/>
            <person name="Watanabe K."/>
            <person name="Kumagai A."/>
            <person name="Itakura S."/>
            <person name="Fukuzumi Y."/>
            <person name="Fujimori Y."/>
            <person name="Komiyama M."/>
            <person name="Tashiro H."/>
            <person name="Tanigami A."/>
            <person name="Fujiwara T."/>
            <person name="Ono T."/>
            <person name="Yamada K."/>
            <person name="Fujii Y."/>
            <person name="Ozaki K."/>
            <person name="Hirao M."/>
            <person name="Ohmori Y."/>
            <person name="Kawabata A."/>
            <person name="Hikiji T."/>
            <person name="Kobatake N."/>
            <person name="Inagaki H."/>
            <person name="Ikema Y."/>
            <person name="Okamoto S."/>
            <person name="Okitani R."/>
            <person name="Kawakami T."/>
            <person name="Noguchi S."/>
            <person name="Itoh T."/>
            <person name="Shigeta K."/>
            <person name="Senba T."/>
            <person name="Matsumura K."/>
            <person name="Nakajima Y."/>
            <person name="Mizuno T."/>
            <person name="Morinaga M."/>
            <person name="Sasaki M."/>
            <person name="Togashi T."/>
            <person name="Oyama M."/>
            <person name="Hata H."/>
            <person name="Watanabe M."/>
            <person name="Komatsu T."/>
            <person name="Mizushima-Sugano J."/>
            <person name="Satoh T."/>
            <person name="Shirai Y."/>
            <person name="Takahashi Y."/>
            <person name="Nakagawa K."/>
            <person name="Okumura K."/>
            <person name="Nagase T."/>
            <person name="Nomura N."/>
            <person name="Kikuchi H."/>
            <person name="Masuho Y."/>
            <person name="Yamashita R."/>
            <person name="Nakai K."/>
            <person name="Yada T."/>
            <person name="Nakamura Y."/>
            <person name="Ohara O."/>
            <person name="Isogai T."/>
            <person name="Sugano S."/>
        </authorList>
    </citation>
    <scope>NUCLEOTIDE SEQUENCE [LARGE SCALE MRNA] OF 586-1184</scope>
    <source>
        <tissue>Lung</tissue>
    </source>
</reference>
<reference key="5">
    <citation type="journal article" date="2008" name="Proc. Natl. Acad. Sci. U.S.A.">
        <title>A quantitative atlas of mitotic phosphorylation.</title>
        <authorList>
            <person name="Dephoure N."/>
            <person name="Zhou C."/>
            <person name="Villen J."/>
            <person name="Beausoleil S.A."/>
            <person name="Bakalarski C.E."/>
            <person name="Elledge S.J."/>
            <person name="Gygi S.P."/>
        </authorList>
    </citation>
    <scope>PHOSPHORYLATION [LARGE SCALE ANALYSIS] AT SER-747; THR-763; SER-994 AND SER-1198</scope>
    <scope>IDENTIFICATION BY MASS SPECTROMETRY [LARGE SCALE ANALYSIS]</scope>
    <source>
        <tissue>Cervix carcinoma</tissue>
    </source>
</reference>
<reference key="6">
    <citation type="journal article" date="2009" name="Sci. Signal.">
        <title>Quantitative phosphoproteomic analysis of T cell receptor signaling reveals system-wide modulation of protein-protein interactions.</title>
        <authorList>
            <person name="Mayya V."/>
            <person name="Lundgren D.H."/>
            <person name="Hwang S.-I."/>
            <person name="Rezaul K."/>
            <person name="Wu L."/>
            <person name="Eng J.K."/>
            <person name="Rodionov V."/>
            <person name="Han D.K."/>
        </authorList>
    </citation>
    <scope>PHOSPHORYLATION [LARGE SCALE ANALYSIS] AT SER-1198</scope>
    <scope>IDENTIFICATION BY MASS SPECTROMETRY [LARGE SCALE ANALYSIS]</scope>
    <source>
        <tissue>Leukemic T-cell</tissue>
    </source>
</reference>
<reference key="7">
    <citation type="journal article" date="2009" name="Science">
        <title>Lysine acetylation targets protein complexes and co-regulates major cellular functions.</title>
        <authorList>
            <person name="Choudhary C."/>
            <person name="Kumar C."/>
            <person name="Gnad F."/>
            <person name="Nielsen M.L."/>
            <person name="Rehman M."/>
            <person name="Walther T.C."/>
            <person name="Olsen J.V."/>
            <person name="Mann M."/>
        </authorList>
    </citation>
    <scope>ACETYLATION [LARGE SCALE ANALYSIS] AT LYS-408</scope>
    <scope>IDENTIFICATION BY MASS SPECTROMETRY [LARGE SCALE ANALYSIS]</scope>
</reference>
<reference key="8">
    <citation type="journal article" date="2010" name="Sci. Signal.">
        <title>Quantitative phosphoproteomics reveals widespread full phosphorylation site occupancy during mitosis.</title>
        <authorList>
            <person name="Olsen J.V."/>
            <person name="Vermeulen M."/>
            <person name="Santamaria A."/>
            <person name="Kumar C."/>
            <person name="Miller M.L."/>
            <person name="Jensen L.J."/>
            <person name="Gnad F."/>
            <person name="Cox J."/>
            <person name="Jensen T.S."/>
            <person name="Nigg E.A."/>
            <person name="Brunak S."/>
            <person name="Mann M."/>
        </authorList>
    </citation>
    <scope>PHOSPHORYLATION [LARGE SCALE ANALYSIS] AT SER-1198</scope>
    <scope>IDENTIFICATION BY MASS SPECTROMETRY [LARGE SCALE ANALYSIS]</scope>
    <source>
        <tissue>Cervix carcinoma</tissue>
    </source>
</reference>
<reference key="9">
    <citation type="journal article" date="2011" name="BMC Syst. Biol.">
        <title>Initial characterization of the human central proteome.</title>
        <authorList>
            <person name="Burkard T.R."/>
            <person name="Planyavsky M."/>
            <person name="Kaupe I."/>
            <person name="Breitwieser F.P."/>
            <person name="Buerckstuemmer T."/>
            <person name="Bennett K.L."/>
            <person name="Superti-Furga G."/>
            <person name="Colinge J."/>
        </authorList>
    </citation>
    <scope>IDENTIFICATION BY MASS SPECTROMETRY [LARGE SCALE ANALYSIS]</scope>
</reference>
<reference key="10">
    <citation type="journal article" date="2011" name="Sci. Signal.">
        <title>System-wide temporal characterization of the proteome and phosphoproteome of human embryonic stem cell differentiation.</title>
        <authorList>
            <person name="Rigbolt K.T."/>
            <person name="Prokhorova T.A."/>
            <person name="Akimov V."/>
            <person name="Henningsen J."/>
            <person name="Johansen P.T."/>
            <person name="Kratchmarova I."/>
            <person name="Kassem M."/>
            <person name="Mann M."/>
            <person name="Olsen J.V."/>
            <person name="Blagoev B."/>
        </authorList>
    </citation>
    <scope>PHOSPHORYLATION [LARGE SCALE ANALYSIS] AT SER-1198</scope>
    <scope>IDENTIFICATION BY MASS SPECTROMETRY [LARGE SCALE ANALYSIS]</scope>
</reference>
<reference key="11">
    <citation type="journal article" date="2013" name="Cell">
        <title>OTU deubiquitinases reveal mechanisms of linkage specificity and enable ubiquitin chain restriction analysis.</title>
        <authorList>
            <person name="Mevissen T.E."/>
            <person name="Hospenthal M.K."/>
            <person name="Geurink P.P."/>
            <person name="Elliott P.R."/>
            <person name="Akutsu M."/>
            <person name="Arnaudo N."/>
            <person name="Ekkebus R."/>
            <person name="Kulathu Y."/>
            <person name="Wauer T."/>
            <person name="El Oualid F."/>
            <person name="Freund S.M."/>
            <person name="Ovaa H."/>
            <person name="Komander D."/>
        </authorList>
    </citation>
    <scope>FUNCTION</scope>
    <scope>CATALYTIC ACTIVITY</scope>
</reference>
<reference key="12">
    <citation type="journal article" date="2013" name="J. Proteome Res.">
        <title>Toward a comprehensive characterization of a human cancer cell phosphoproteome.</title>
        <authorList>
            <person name="Zhou H."/>
            <person name="Di Palma S."/>
            <person name="Preisinger C."/>
            <person name="Peng M."/>
            <person name="Polat A.N."/>
            <person name="Heck A.J."/>
            <person name="Mohammed S."/>
        </authorList>
    </citation>
    <scope>PHOSPHORYLATION [LARGE SCALE ANALYSIS] AT SER-747; SER-757; SER-768; SER-994; SER-998; SER-1077 AND SER-1198</scope>
    <scope>IDENTIFICATION BY MASS SPECTROMETRY [LARGE SCALE ANALYSIS]</scope>
    <source>
        <tissue>Cervix carcinoma</tissue>
        <tissue>Erythroleukemia</tissue>
    </source>
</reference>
<reference key="13">
    <citation type="journal article" date="2014" name="J. Proteomics">
        <title>An enzyme assisted RP-RPLC approach for in-depth analysis of human liver phosphoproteome.</title>
        <authorList>
            <person name="Bian Y."/>
            <person name="Song C."/>
            <person name="Cheng K."/>
            <person name="Dong M."/>
            <person name="Wang F."/>
            <person name="Huang J."/>
            <person name="Sun D."/>
            <person name="Wang L."/>
            <person name="Ye M."/>
            <person name="Zou H."/>
        </authorList>
    </citation>
    <scope>IDENTIFICATION BY MASS SPECTROMETRY [LARGE SCALE ANALYSIS]</scope>
    <source>
        <tissue>Liver</tissue>
    </source>
</reference>
<reference key="14">
    <citation type="journal article" date="2017" name="Proc. Natl. Acad. Sci. U.S.A.">
        <title>Deubiquitinating enzyme VCIP135 dictates the duration of botulinum neurotoxin type A intoxication.</title>
        <authorList>
            <person name="Tsai Y.C."/>
            <person name="Kotiya A."/>
            <person name="Kiris E."/>
            <person name="Yang M."/>
            <person name="Bavari S."/>
            <person name="Tessarollo L."/>
            <person name="Oyler G.A."/>
            <person name="Weissman A.M."/>
        </authorList>
    </citation>
    <scope>FUNCTION (MICROBIAL INFECTION)</scope>
</reference>
<reference key="15">
    <citation type="journal article" date="2020" name="Mol. Cell">
        <title>Tandem deubiquitination and acetylation of SPRTN promotes DNA-protein crosslink repair and protects against aging.</title>
        <authorList>
            <person name="Huang J."/>
            <person name="Zhou Q."/>
            <person name="Gao M."/>
            <person name="Nowsheen S."/>
            <person name="Zhao F."/>
            <person name="Kim W."/>
            <person name="Zhu Q."/>
            <person name="Kojima Y."/>
            <person name="Yin P."/>
            <person name="Zhang Y."/>
            <person name="Guo G."/>
            <person name="Tu X."/>
            <person name="Deng M."/>
            <person name="Luo K."/>
            <person name="Qin B."/>
            <person name="Machida Y."/>
            <person name="Lou Z."/>
        </authorList>
    </citation>
    <scope>FUNCTION</scope>
    <scope>CATALYTIC ACTIVITY</scope>
    <scope>SUBCELLULAR LOCATION</scope>
    <scope>MUTAGENESIS OF CYS-219 AND SER-1207</scope>
    <scope>PHOSPHORYLATION AT SER-1207</scope>
</reference>
<organism>
    <name type="scientific">Homo sapiens</name>
    <name type="common">Human</name>
    <dbReference type="NCBI Taxonomy" id="9606"/>
    <lineage>
        <taxon>Eukaryota</taxon>
        <taxon>Metazoa</taxon>
        <taxon>Chordata</taxon>
        <taxon>Craniata</taxon>
        <taxon>Vertebrata</taxon>
        <taxon>Euteleostomi</taxon>
        <taxon>Mammalia</taxon>
        <taxon>Eutheria</taxon>
        <taxon>Euarchontoglires</taxon>
        <taxon>Primates</taxon>
        <taxon>Haplorrhini</taxon>
        <taxon>Catarrhini</taxon>
        <taxon>Hominidae</taxon>
        <taxon>Homo</taxon>
    </lineage>
</organism>
<keyword id="KW-0002">3D-structure</keyword>
<keyword id="KW-0007">Acetylation</keyword>
<keyword id="KW-0963">Cytoplasm</keyword>
<keyword id="KW-0227">DNA damage</keyword>
<keyword id="KW-0234">DNA repair</keyword>
<keyword id="KW-0256">Endoplasmic reticulum</keyword>
<keyword id="KW-0333">Golgi apparatus</keyword>
<keyword id="KW-0378">Hydrolase</keyword>
<keyword id="KW-0539">Nucleus</keyword>
<keyword id="KW-0597">Phosphoprotein</keyword>
<keyword id="KW-0645">Protease</keyword>
<keyword id="KW-1267">Proteomics identification</keyword>
<keyword id="KW-1185">Reference proteome</keyword>
<keyword id="KW-0788">Thiol protease</keyword>
<keyword id="KW-0833">Ubl conjugation pathway</keyword>
<evidence type="ECO:0000250" key="1">
    <source>
        <dbReference type="UniProtKB" id="Q8CF97"/>
    </source>
</evidence>
<evidence type="ECO:0000250" key="2">
    <source>
        <dbReference type="UniProtKB" id="Q96FW1"/>
    </source>
</evidence>
<evidence type="ECO:0000255" key="3">
    <source>
        <dbReference type="PROSITE-ProRule" id="PRU00139"/>
    </source>
</evidence>
<evidence type="ECO:0000256" key="4">
    <source>
        <dbReference type="SAM" id="MobiDB-lite"/>
    </source>
</evidence>
<evidence type="ECO:0000269" key="5">
    <source>
    </source>
</evidence>
<evidence type="ECO:0000269" key="6">
    <source>
    </source>
</evidence>
<evidence type="ECO:0000269" key="7">
    <source>
    </source>
</evidence>
<evidence type="ECO:0000303" key="8">
    <source>
    </source>
</evidence>
<evidence type="ECO:0000303" key="9">
    <source>
    </source>
</evidence>
<evidence type="ECO:0000303" key="10">
    <source>
    </source>
</evidence>
<evidence type="ECO:0000305" key="11"/>
<evidence type="ECO:0000305" key="12">
    <source>
    </source>
</evidence>
<evidence type="ECO:0000312" key="13">
    <source>
        <dbReference type="HGNC" id="HGNC:30897"/>
    </source>
</evidence>
<evidence type="ECO:0007744" key="14">
    <source>
    </source>
</evidence>
<evidence type="ECO:0007744" key="15">
    <source>
    </source>
</evidence>
<evidence type="ECO:0007744" key="16">
    <source>
    </source>
</evidence>
<evidence type="ECO:0007744" key="17">
    <source>
    </source>
</evidence>
<evidence type="ECO:0007744" key="18">
    <source>
    </source>
</evidence>
<evidence type="ECO:0007744" key="19">
    <source>
    </source>
</evidence>
<evidence type="ECO:0007829" key="20">
    <source>
        <dbReference type="PDB" id="8YKA"/>
    </source>
</evidence>
<comment type="function">
    <text evidence="1 5 7">Deubiquitinating enzyme involved in DNA repair and reassembly of the Golgi apparatus and the endoplasmic reticulum following mitosis (PubMed:32649882). Necessary for VCP-mediated reassembly of Golgi stacks after mitosis (By similarity). Plays a role in VCP-mediated formation of transitional endoplasmic reticulum (tER) (By similarity). Mediates dissociation of the ternary complex containing STX5A, NSFL1C and VCP (By similarity). Also involved in DNA repair following phosphorylation by ATM or ATR: acts by catalyzing deubiquitination of SPRTN, thereby promoting SPRTN recruitment to chromatin and subsequent proteolytic cleavage of covalent DNA-protein cross-links (DPCs) (PubMed:32649882). Hydrolyzes 'Lys-11'- and 'Lys-48'-linked polyubiquitin chains (PubMed:23827681).</text>
</comment>
<comment type="function">
    <text evidence="6">(Microbial infection) Regulates the duration of C.botulinum neurotoxin type A (BoNT/A) intoxication by catalyzing deubiquitination of Botulinum neurotoxin A light chain (LC), thereby preventing LC degradation by the proteasome, and accelerating botulinum neurotoxin intoxication in patients.</text>
</comment>
<comment type="catalytic activity">
    <reaction evidence="5 7">
        <text>Thiol-dependent hydrolysis of ester, thioester, amide, peptide and isopeptide bonds formed by the C-terminal Gly of ubiquitin (a 76-residue protein attached to proteins as an intracellular targeting signal).</text>
        <dbReference type="EC" id="3.4.19.12"/>
    </reaction>
</comment>
<comment type="subunit">
    <text evidence="1">Binds VCP and the ternary complex containing STX5A, NSFL1C and VCP.</text>
</comment>
<comment type="interaction">
    <interactant intactId="EBI-1995920">
        <id>Q96JH7</id>
    </interactant>
    <interactant intactId="EBI-10753637">
        <id>Q96KN8</id>
        <label>PLAAT5</label>
    </interactant>
    <organismsDiffer>false</organismsDiffer>
    <experiments>3</experiments>
</comment>
<comment type="subcellular location">
    <subcellularLocation>
        <location evidence="7">Nucleus</location>
    </subcellularLocation>
    <subcellularLocation>
        <location evidence="7">Cytoplasm</location>
    </subcellularLocation>
    <subcellularLocation>
        <location evidence="1">Endoplasmic reticulum</location>
    </subcellularLocation>
    <subcellularLocation>
        <location evidence="1">Golgi apparatus</location>
        <location evidence="1">Golgi stack</location>
    </subcellularLocation>
    <text evidence="1 7">Associated with Golgi stacks and endoplasmic reticulum (By similarity). Displays cytoplasmic to nuclear translocation in response to DNA-protein cross-links (DPCs)-inducing agents (PubMed:32649882).</text>
</comment>
<comment type="PTM">
    <text evidence="7">Phosphorylated at Ser-1207 by ATM or ATR following induction of covalent DNA-protein cross-links (DPCs).</text>
</comment>
<comment type="sequence caution" evidence="11">
    <conflict type="frameshift">
        <sequence resource="EMBL-CDS" id="BAB15552"/>
    </conflict>
</comment>
<comment type="sequence caution" evidence="11">
    <conflict type="erroneous initiation">
        <sequence resource="EMBL-CDS" id="BAB47479"/>
    </conflict>
</comment>
<protein>
    <recommendedName>
        <fullName evidence="11">Deubiquitinating protein VCPIP1</fullName>
        <ecNumber evidence="5 7">3.4.19.12</ecNumber>
    </recommendedName>
    <alternativeName>
        <fullName evidence="11">Valosin-containing protein p97/p47 complex-interacting protein 1</fullName>
    </alternativeName>
    <alternativeName>
        <fullName evidence="1">Valosin-containing protein p97/p47 complex-interacting protein p135</fullName>
        <shortName evidence="1">VCP/p47 complex-interacting 135-kDa protein</shortName>
    </alternativeName>
</protein>
<proteinExistence type="evidence at protein level"/>
<gene>
    <name evidence="10 13" type="primary">VCPIP1</name>
    <name evidence="8" type="synonym">KIAA1850</name>
    <name evidence="9" type="synonym">VCIP135</name>
</gene>
<accession>Q96JH7</accession>
<accession>Q504T4</accession>
<accession>Q86T93</accession>
<accession>Q86W01</accession>
<accession>Q8N3A9</accession>
<accession>Q9H5R8</accession>
<sequence length="1222" mass="134321">MSQPPPPPPPLPPPPPPPEAPQTPSSLASAAASGGLLKRRDRRILSGSCPDPKCQARLFFPASGSVSIECTECGQRHEQQQLLGVEEVTDPDVVLHNLLRNALLGVTGAPKKNTELVKVMGLSNYHCKLLSPILARYGMDKQTGRAKLLRDMNQGELFDCALLGDRAFLIEPEHVNTVGYGKDRSGSLLYLHDTLEDIKRANKSQECLIPVHVDGDGHCLVHAVSRALVGRELFWHALRENLKQHFQQHLARYQALFHDFIDAAEWEDIINECDPLFVPPEGVPLGLRNIHIFGLANVLHRPIILLDSLSGMRSSGDYSATFLPGLIPAEKCTGKDGHLNKPICIAWSSSGRNHYIPLVGIKGAALPKLPMNLLPKAWGVPQDLIKKYIKLEEDGGCVIGGDRSLQDKYLLRLVAAMEEVFMDKHGIHPSLVADVHQYFYRRTGVIGVQPEEVTAAAKKAVMDNRLHKCLLCGALSELHVPPEWLAPGGKLYNLAKSTHGQLRTDKNYSFPLNNLVCSYDSVKDVLVPDYGMSNLTACNWCHGTSVRKVRGDGSIVYLDGDRTNSRSTGGKCGCGFKHFWDGKEYDNLPEAFPITLEWGGRVVRETVYWFQYESDSSLNSNVYDVAMKLVTKHFPGEFGSEILVQKVVHTILHQTAKKNPDDYTPVNIDGAHAQRVGDVQGQESESQLPTKIILTGQKTKTLHKEELNMSKTERTIQQNITEQASVMQKRKTEKLKQEQKGQPRTVSPSTIRDGPSSAPATPTKAPYSPTTSKEKKIRITTNDGRQSMVTLKSSTTFFELQESIAREFNIPPYLQCIRYGFPPKELMPPQAGMEKEPVPLQHGDRITIEILKSKAEGGQSAAAHSAHTVKQEDIAVTGKLSSKELQEQAEKEMYSLCLLATLMGEDVWSYAKGLPHMFQQGGVFYSIMKKTMGMADGKHCTFPHLPGKTFVYNASEDRLELCVDAAGHFPIGPDVEDLVKEAVSQVRAEATTRSRESSPSHGLLKLGSGGVVKKKSEQLHNVTAFQGKGHSLGTASGNPHLDPRARETSVVRKHNTGTDFSNSSTKTEPSVFTASSSNSELIRIAPGVVTMRDGRQLDPDLVEAQRKKLQEMVSSIQASMDRHLRDQSTEQSPSDLPQRKTEVVSSSAKSGSLQTGLPESFPLTGGTENLNTETTDGCVADALGAAFATRSKAQRGNSVEELEEMDSQDAEMTNTTEPMDHS</sequence>
<dbReference type="EC" id="3.4.19.12" evidence="5 7"/>
<dbReference type="EMBL" id="AB058753">
    <property type="protein sequence ID" value="BAB47479.1"/>
    <property type="status" value="ALT_INIT"/>
    <property type="molecule type" value="mRNA"/>
</dbReference>
<dbReference type="EMBL" id="AL834476">
    <property type="protein sequence ID" value="CAD39135.1"/>
    <property type="molecule type" value="mRNA"/>
</dbReference>
<dbReference type="EMBL" id="AL832606">
    <property type="protein sequence ID" value="CAD89944.1"/>
    <property type="molecule type" value="mRNA"/>
</dbReference>
<dbReference type="EMBL" id="BC049379">
    <property type="protein sequence ID" value="AAH49379.1"/>
    <property type="molecule type" value="mRNA"/>
</dbReference>
<dbReference type="EMBL" id="BC094799">
    <property type="protein sequence ID" value="AAH94799.1"/>
    <property type="molecule type" value="mRNA"/>
</dbReference>
<dbReference type="EMBL" id="AK026785">
    <property type="protein sequence ID" value="BAB15552.1"/>
    <property type="status" value="ALT_FRAME"/>
    <property type="molecule type" value="mRNA"/>
</dbReference>
<dbReference type="CCDS" id="CCDS6192.1"/>
<dbReference type="RefSeq" id="NP_079330.2">
    <property type="nucleotide sequence ID" value="NM_025054.4"/>
</dbReference>
<dbReference type="PDB" id="8YKA">
    <property type="method" value="EM"/>
    <property type="resolution" value="3.45 A"/>
    <property type="chains" value="1/2/3=105-673"/>
</dbReference>
<dbReference type="PDBsum" id="8YKA"/>
<dbReference type="EMDB" id="EMD-39360"/>
<dbReference type="SMR" id="Q96JH7"/>
<dbReference type="BioGRID" id="123125">
    <property type="interactions" value="175"/>
</dbReference>
<dbReference type="ComplexPortal" id="CPX-8132">
    <property type="entry name" value="VCP-VCPIP1 AAA ATPase complex"/>
</dbReference>
<dbReference type="FunCoup" id="Q96JH7">
    <property type="interactions" value="4206"/>
</dbReference>
<dbReference type="IntAct" id="Q96JH7">
    <property type="interactions" value="123"/>
</dbReference>
<dbReference type="MINT" id="Q96JH7"/>
<dbReference type="STRING" id="9606.ENSP00000309031"/>
<dbReference type="BindingDB" id="Q96JH7"/>
<dbReference type="ChEMBL" id="CHEMBL4630849"/>
<dbReference type="MEROPS" id="C64.006"/>
<dbReference type="GlyCosmos" id="Q96JH7">
    <property type="glycosylation" value="3 sites, 1 glycan"/>
</dbReference>
<dbReference type="GlyGen" id="Q96JH7">
    <property type="glycosylation" value="11 sites, 2 N-linked glycans (2 sites), 1 O-linked glycan (8 sites)"/>
</dbReference>
<dbReference type="iPTMnet" id="Q96JH7"/>
<dbReference type="MetOSite" id="Q96JH7"/>
<dbReference type="PhosphoSitePlus" id="Q96JH7"/>
<dbReference type="SwissPalm" id="Q96JH7"/>
<dbReference type="BioMuta" id="VCPIP1"/>
<dbReference type="DMDM" id="42560002"/>
<dbReference type="jPOST" id="Q96JH7"/>
<dbReference type="MassIVE" id="Q96JH7"/>
<dbReference type="PaxDb" id="9606-ENSP00000309031"/>
<dbReference type="PeptideAtlas" id="Q96JH7"/>
<dbReference type="ProteomicsDB" id="76963"/>
<dbReference type="Pumba" id="Q96JH7"/>
<dbReference type="Antibodypedia" id="24885">
    <property type="antibodies" value="101 antibodies from 27 providers"/>
</dbReference>
<dbReference type="DNASU" id="80124"/>
<dbReference type="Ensembl" id="ENST00000310421.5">
    <property type="protein sequence ID" value="ENSP00000309031.4"/>
    <property type="gene ID" value="ENSG00000175073.8"/>
</dbReference>
<dbReference type="GeneID" id="80124"/>
<dbReference type="KEGG" id="hsa:80124"/>
<dbReference type="MANE-Select" id="ENST00000310421.5">
    <property type="protein sequence ID" value="ENSP00000309031.4"/>
    <property type="RefSeq nucleotide sequence ID" value="NM_025054.5"/>
    <property type="RefSeq protein sequence ID" value="NP_079330.2"/>
</dbReference>
<dbReference type="UCSC" id="uc003xwn.4">
    <property type="organism name" value="human"/>
</dbReference>
<dbReference type="AGR" id="HGNC:30897"/>
<dbReference type="CTD" id="80124"/>
<dbReference type="DisGeNET" id="80124"/>
<dbReference type="GeneCards" id="VCPIP1"/>
<dbReference type="HGNC" id="HGNC:30897">
    <property type="gene designation" value="VCPIP1"/>
</dbReference>
<dbReference type="HPA" id="ENSG00000175073">
    <property type="expression patterns" value="Tissue enhanced (bone)"/>
</dbReference>
<dbReference type="MIM" id="611745">
    <property type="type" value="gene"/>
</dbReference>
<dbReference type="neXtProt" id="NX_Q96JH7"/>
<dbReference type="OpenTargets" id="ENSG00000175073"/>
<dbReference type="PharmGKB" id="PA142670629"/>
<dbReference type="VEuPathDB" id="HostDB:ENSG00000175073"/>
<dbReference type="eggNOG" id="KOG4345">
    <property type="taxonomic scope" value="Eukaryota"/>
</dbReference>
<dbReference type="GeneTree" id="ENSGT00390000002854"/>
<dbReference type="HOGENOM" id="CLU_009674_0_0_1"/>
<dbReference type="InParanoid" id="Q96JH7"/>
<dbReference type="OMA" id="KHSTETD"/>
<dbReference type="OrthoDB" id="10012024at2759"/>
<dbReference type="PAN-GO" id="Q96JH7">
    <property type="GO annotations" value="5 GO annotations based on evolutionary models"/>
</dbReference>
<dbReference type="PhylomeDB" id="Q96JH7"/>
<dbReference type="TreeFam" id="TF329469"/>
<dbReference type="PathwayCommons" id="Q96JH7"/>
<dbReference type="Reactome" id="R-HSA-5689896">
    <property type="pathway name" value="Ovarian tumor domain proteases"/>
</dbReference>
<dbReference type="SignaLink" id="Q96JH7"/>
<dbReference type="SIGNOR" id="Q96JH7"/>
<dbReference type="BioGRID-ORCS" id="80124">
    <property type="hits" value="91 hits in 1211 CRISPR screens"/>
</dbReference>
<dbReference type="CD-CODE" id="FB4E32DD">
    <property type="entry name" value="Presynaptic clusters and postsynaptic densities"/>
</dbReference>
<dbReference type="ChiTaRS" id="VCPIP1">
    <property type="organism name" value="human"/>
</dbReference>
<dbReference type="GeneWiki" id="VCPIP1"/>
<dbReference type="GenomeRNAi" id="80124"/>
<dbReference type="Pharos" id="Q96JH7">
    <property type="development level" value="Tbio"/>
</dbReference>
<dbReference type="PRO" id="PR:Q96JH7"/>
<dbReference type="Proteomes" id="UP000005640">
    <property type="component" value="Chromosome 8"/>
</dbReference>
<dbReference type="RNAct" id="Q96JH7">
    <property type="molecule type" value="protein"/>
</dbReference>
<dbReference type="Bgee" id="ENSG00000175073">
    <property type="expression patterns" value="Expressed in tendon of biceps brachii and 143 other cell types or tissues"/>
</dbReference>
<dbReference type="GO" id="GO:0005737">
    <property type="term" value="C:cytoplasm"/>
    <property type="evidence" value="ECO:0000314"/>
    <property type="project" value="LIFEdb"/>
</dbReference>
<dbReference type="GO" id="GO:0005788">
    <property type="term" value="C:endoplasmic reticulum lumen"/>
    <property type="evidence" value="ECO:0000304"/>
    <property type="project" value="Reactome"/>
</dbReference>
<dbReference type="GO" id="GO:0005795">
    <property type="term" value="C:Golgi stack"/>
    <property type="evidence" value="ECO:0007669"/>
    <property type="project" value="UniProtKB-SubCell"/>
</dbReference>
<dbReference type="GO" id="GO:0005634">
    <property type="term" value="C:nucleus"/>
    <property type="evidence" value="ECO:0000314"/>
    <property type="project" value="UniProtKB"/>
</dbReference>
<dbReference type="GO" id="GO:0004843">
    <property type="term" value="F:cysteine-type deubiquitinase activity"/>
    <property type="evidence" value="ECO:0000314"/>
    <property type="project" value="UniProtKB"/>
</dbReference>
<dbReference type="GO" id="GO:0006974">
    <property type="term" value="P:DNA damage response"/>
    <property type="evidence" value="ECO:0000314"/>
    <property type="project" value="UniProtKB"/>
</dbReference>
<dbReference type="GO" id="GO:0016320">
    <property type="term" value="P:endoplasmic reticulum membrane fusion"/>
    <property type="evidence" value="ECO:0000318"/>
    <property type="project" value="GO_Central"/>
</dbReference>
<dbReference type="GO" id="GO:0090168">
    <property type="term" value="P:Golgi reassembly"/>
    <property type="evidence" value="ECO:0000318"/>
    <property type="project" value="GO_Central"/>
</dbReference>
<dbReference type="GO" id="GO:0016579">
    <property type="term" value="P:protein deubiquitination"/>
    <property type="evidence" value="ECO:0000314"/>
    <property type="project" value="UniProtKB"/>
</dbReference>
<dbReference type="GO" id="GO:0035871">
    <property type="term" value="P:protein K11-linked deubiquitination"/>
    <property type="evidence" value="ECO:0000314"/>
    <property type="project" value="UniProtKB"/>
</dbReference>
<dbReference type="GO" id="GO:0071108">
    <property type="term" value="P:protein K48-linked deubiquitination"/>
    <property type="evidence" value="ECO:0000314"/>
    <property type="project" value="UniProtKB"/>
</dbReference>
<dbReference type="GO" id="GO:0016567">
    <property type="term" value="P:protein ubiquitination"/>
    <property type="evidence" value="ECO:0000250"/>
    <property type="project" value="UniProtKB"/>
</dbReference>
<dbReference type="GO" id="GO:0106300">
    <property type="term" value="P:protein-DNA covalent cross-linking repair"/>
    <property type="evidence" value="ECO:0000314"/>
    <property type="project" value="UniProtKB"/>
</dbReference>
<dbReference type="GO" id="GO:0006508">
    <property type="term" value="P:proteolysis"/>
    <property type="evidence" value="ECO:0007669"/>
    <property type="project" value="UniProtKB-KW"/>
</dbReference>
<dbReference type="GO" id="GO:1905634">
    <property type="term" value="P:regulation of protein localization to chromatin"/>
    <property type="evidence" value="ECO:0000314"/>
    <property type="project" value="UniProtKB"/>
</dbReference>
<dbReference type="CDD" id="cd22769">
    <property type="entry name" value="OTU_VCIP135"/>
    <property type="match status" value="1"/>
</dbReference>
<dbReference type="CDD" id="cd17059">
    <property type="entry name" value="Ubl_OTU1"/>
    <property type="match status" value="1"/>
</dbReference>
<dbReference type="FunFam" id="3.10.20.90:FF:000146">
    <property type="entry name" value="deubiquitinating protein VCIP135 isoform X1"/>
    <property type="match status" value="1"/>
</dbReference>
<dbReference type="FunFam" id="3.90.70.80:FF:000004">
    <property type="entry name" value="deubiquitinating protein VCIP135 isoform X2"/>
    <property type="match status" value="1"/>
</dbReference>
<dbReference type="Gene3D" id="3.90.70.80">
    <property type="match status" value="1"/>
</dbReference>
<dbReference type="Gene3D" id="3.10.20.90">
    <property type="entry name" value="Phosphatidylinositol 3-kinase Catalytic Subunit, Chain A, domain 1"/>
    <property type="match status" value="1"/>
</dbReference>
<dbReference type="InterPro" id="IPR048857">
    <property type="entry name" value="OTU1_Ubl"/>
</dbReference>
<dbReference type="InterPro" id="IPR003323">
    <property type="entry name" value="OTU_dom"/>
</dbReference>
<dbReference type="InterPro" id="IPR029071">
    <property type="entry name" value="Ubiquitin-like_domsf"/>
</dbReference>
<dbReference type="InterPro" id="IPR039087">
    <property type="entry name" value="VCPIP1"/>
</dbReference>
<dbReference type="InterPro" id="IPR045827">
    <property type="entry name" value="VCPIP1_N"/>
</dbReference>
<dbReference type="PANTHER" id="PTHR14843">
    <property type="entry name" value="DEUBIQUITINATING PROTEIN VCIP135"/>
    <property type="match status" value="1"/>
</dbReference>
<dbReference type="PANTHER" id="PTHR14843:SF2">
    <property type="entry name" value="DEUBIQUITINATING PROTEIN VCPIP1"/>
    <property type="match status" value="1"/>
</dbReference>
<dbReference type="Pfam" id="PF02338">
    <property type="entry name" value="OTU"/>
    <property type="match status" value="1"/>
</dbReference>
<dbReference type="Pfam" id="PF21403">
    <property type="entry name" value="OTU1_UBXL"/>
    <property type="match status" value="1"/>
</dbReference>
<dbReference type="Pfam" id="PF19437">
    <property type="entry name" value="VCIP135_N"/>
    <property type="match status" value="1"/>
</dbReference>
<dbReference type="SUPFAM" id="SSF54236">
    <property type="entry name" value="Ubiquitin-like"/>
    <property type="match status" value="1"/>
</dbReference>
<dbReference type="PROSITE" id="PS50802">
    <property type="entry name" value="OTU"/>
    <property type="match status" value="1"/>
</dbReference>